<geneLocation type="chloroplast"/>
<accession>A9QCA0</accession>
<reference key="1">
    <citation type="journal article" date="2007" name="Proc. Natl. Acad. Sci. U.S.A.">
        <title>Analysis of 81 genes from 64 plastid genomes resolves relationships in angiosperms and identifies genome-scale evolutionary patterns.</title>
        <authorList>
            <person name="Jansen R.K."/>
            <person name="Cai Z."/>
            <person name="Raubeson L.A."/>
            <person name="Daniell H."/>
            <person name="dePamphilis C.W."/>
            <person name="Leebens-Mack J."/>
            <person name="Muller K.F."/>
            <person name="Guisinger-Bellian M."/>
            <person name="Haberle R.C."/>
            <person name="Hansen A.K."/>
            <person name="Chumley T.W."/>
            <person name="Lee S.B."/>
            <person name="Peery R."/>
            <person name="McNeal J.R."/>
            <person name="Kuehl J.V."/>
            <person name="Boore J.L."/>
        </authorList>
    </citation>
    <scope>NUCLEOTIDE SEQUENCE [GENOMIC DNA]</scope>
</reference>
<reference key="2">
    <citation type="journal article" date="2008" name="J. Mol. Evol.">
        <title>Extensive rearrangements in the chloroplast genome of Trachelium caeruleum are associated with repeats and tRNA genes.</title>
        <authorList>
            <person name="Haberle R.C."/>
            <person name="Fourcade H.M."/>
            <person name="Boore J.L."/>
            <person name="Jansen R.K."/>
        </authorList>
    </citation>
    <scope>NUCLEOTIDE SEQUENCE [LARGE SCALE GENOMIC DNA]</scope>
</reference>
<name>CCSA_TRACE</name>
<feature type="chain" id="PRO_0000353792" description="Cytochrome c biogenesis protein CcsA">
    <location>
        <begin position="1"/>
        <end position="316"/>
    </location>
</feature>
<feature type="transmembrane region" description="Helical" evidence="1">
    <location>
        <begin position="15"/>
        <end position="35"/>
    </location>
</feature>
<feature type="transmembrane region" description="Helical" evidence="1">
    <location>
        <begin position="44"/>
        <end position="64"/>
    </location>
</feature>
<feature type="transmembrane region" description="Helical" evidence="1">
    <location>
        <begin position="71"/>
        <end position="91"/>
    </location>
</feature>
<feature type="transmembrane region" description="Helical" evidence="1">
    <location>
        <begin position="142"/>
        <end position="162"/>
    </location>
</feature>
<feature type="transmembrane region" description="Helical" evidence="1">
    <location>
        <begin position="220"/>
        <end position="240"/>
    </location>
</feature>
<feature type="transmembrane region" description="Helical" evidence="1">
    <location>
        <begin position="247"/>
        <end position="267"/>
    </location>
</feature>
<feature type="transmembrane region" description="Helical" evidence="1">
    <location>
        <begin position="281"/>
        <end position="301"/>
    </location>
</feature>
<keyword id="KW-0150">Chloroplast</keyword>
<keyword id="KW-0201">Cytochrome c-type biogenesis</keyword>
<keyword id="KW-0472">Membrane</keyword>
<keyword id="KW-0934">Plastid</keyword>
<keyword id="KW-0793">Thylakoid</keyword>
<keyword id="KW-0812">Transmembrane</keyword>
<keyword id="KW-1133">Transmembrane helix</keyword>
<proteinExistence type="inferred from homology"/>
<comment type="function">
    <text evidence="1">Required during biogenesis of c-type cytochromes (cytochrome c6 and cytochrome f) at the step of heme attachment.</text>
</comment>
<comment type="subunit">
    <text evidence="1">May interact with Ccs1.</text>
</comment>
<comment type="subcellular location">
    <subcellularLocation>
        <location evidence="1">Plastid</location>
        <location evidence="1">Chloroplast thylakoid membrane</location>
        <topology evidence="1">Multi-pass membrane protein</topology>
    </subcellularLocation>
</comment>
<comment type="similarity">
    <text evidence="1">Belongs to the CcmF/CycK/Ccl1/NrfE/CcsA family.</text>
</comment>
<evidence type="ECO:0000255" key="1">
    <source>
        <dbReference type="HAMAP-Rule" id="MF_01391"/>
    </source>
</evidence>
<sequence length="316" mass="36174">MKFSTLEHILIHLSFSICSIVITIRLINLVVTTILKPYDFSEKGIITTFLCLTGFLVTRWIYSGHFPLSNLYESLIFLSWSFSLIHIVAYLKKNKNLSRITASSTIFTQGFATSGLLTEINKSGILVPALQSEWLIMHVSMMILSYAALLCGSLLSAALLVITCRKKFNELLRLIESLSFDKIQYRNQRIHLFGKTYFFSVKNYYKIQLVQQLDYWSYRVISLGFIFLTMGILSGAVWANEAWGSYWSWDPKETWAFITWIIFAIYLHTRTNKNFWGANSAIVAVIGFLIIWICYFGVNLLGIGLHSYGSFKGMAS</sequence>
<protein>
    <recommendedName>
        <fullName evidence="1">Cytochrome c biogenesis protein CcsA</fullName>
    </recommendedName>
</protein>
<gene>
    <name evidence="1" type="primary">ccsA</name>
</gene>
<organism>
    <name type="scientific">Trachelium caeruleum</name>
    <name type="common">Blue throatwort</name>
    <dbReference type="NCBI Taxonomy" id="28494"/>
    <lineage>
        <taxon>Eukaryota</taxon>
        <taxon>Viridiplantae</taxon>
        <taxon>Streptophyta</taxon>
        <taxon>Embryophyta</taxon>
        <taxon>Tracheophyta</taxon>
        <taxon>Spermatophyta</taxon>
        <taxon>Magnoliopsida</taxon>
        <taxon>eudicotyledons</taxon>
        <taxon>Gunneridae</taxon>
        <taxon>Pentapetalae</taxon>
        <taxon>asterids</taxon>
        <taxon>campanulids</taxon>
        <taxon>Asterales</taxon>
        <taxon>Campanulaceae</taxon>
        <taxon>Trachelium</taxon>
    </lineage>
</organism>
<dbReference type="EMBL" id="EU017286">
    <property type="protein sequence ID" value="ABU85693.1"/>
    <property type="molecule type" value="Genomic_DNA"/>
</dbReference>
<dbReference type="EMBL" id="EU090187">
    <property type="protein sequence ID" value="ABV26533.1"/>
    <property type="molecule type" value="Genomic_DNA"/>
</dbReference>
<dbReference type="RefSeq" id="YP_001718708.1">
    <property type="nucleotide sequence ID" value="NC_010442.1"/>
</dbReference>
<dbReference type="SMR" id="A9QCA0"/>
<dbReference type="GeneID" id="6155908"/>
<dbReference type="GO" id="GO:0009535">
    <property type="term" value="C:chloroplast thylakoid membrane"/>
    <property type="evidence" value="ECO:0007669"/>
    <property type="project" value="UniProtKB-SubCell"/>
</dbReference>
<dbReference type="GO" id="GO:0005886">
    <property type="term" value="C:plasma membrane"/>
    <property type="evidence" value="ECO:0007669"/>
    <property type="project" value="TreeGrafter"/>
</dbReference>
<dbReference type="GO" id="GO:0020037">
    <property type="term" value="F:heme binding"/>
    <property type="evidence" value="ECO:0007669"/>
    <property type="project" value="InterPro"/>
</dbReference>
<dbReference type="GO" id="GO:0017004">
    <property type="term" value="P:cytochrome complex assembly"/>
    <property type="evidence" value="ECO:0007669"/>
    <property type="project" value="UniProtKB-UniRule"/>
</dbReference>
<dbReference type="HAMAP" id="MF_01391">
    <property type="entry name" value="CytC_CcsA"/>
    <property type="match status" value="1"/>
</dbReference>
<dbReference type="InterPro" id="IPR002541">
    <property type="entry name" value="Cyt_c_assembly"/>
</dbReference>
<dbReference type="InterPro" id="IPR017562">
    <property type="entry name" value="Cyt_c_biogenesis_CcsA"/>
</dbReference>
<dbReference type="InterPro" id="IPR045062">
    <property type="entry name" value="Cyt_c_biogenesis_CcsA/CcmC"/>
</dbReference>
<dbReference type="NCBIfam" id="TIGR03144">
    <property type="entry name" value="cytochr_II_ccsB"/>
    <property type="match status" value="1"/>
</dbReference>
<dbReference type="PANTHER" id="PTHR30071:SF1">
    <property type="entry name" value="CYTOCHROME B_B6 PROTEIN-RELATED"/>
    <property type="match status" value="1"/>
</dbReference>
<dbReference type="PANTHER" id="PTHR30071">
    <property type="entry name" value="HEME EXPORTER PROTEIN C"/>
    <property type="match status" value="1"/>
</dbReference>
<dbReference type="Pfam" id="PF01578">
    <property type="entry name" value="Cytochrom_C_asm"/>
    <property type="match status" value="1"/>
</dbReference>